<feature type="chain" id="PRO_0000057722" description="Extracellular sucrase">
    <location>
        <begin position="1"/>
        <end position="413"/>
    </location>
</feature>
<feature type="active site" description="Nucleophile" evidence="2">
    <location>
        <position position="44"/>
    </location>
</feature>
<feature type="active site" description="Proton donor/acceptor" evidence="2">
    <location>
        <position position="276"/>
    </location>
</feature>
<feature type="site" description="Transition state stabilizer" evidence="2">
    <location>
        <position position="192"/>
    </location>
</feature>
<feature type="sequence conflict" description="In Ref. 1; BAA04476." evidence="3" ref="1">
    <original>S</original>
    <variation>L</variation>
    <location>
        <position position="105"/>
    </location>
</feature>
<feature type="sequence conflict" description="In Ref. 1; BAA04476." evidence="3" ref="1">
    <original>T</original>
    <variation>S</variation>
    <location>
        <position position="108"/>
    </location>
</feature>
<protein>
    <recommendedName>
        <fullName>Extracellular sucrase</fullName>
        <ecNumber>3.2.1.26</ecNumber>
    </recommendedName>
    <alternativeName>
        <fullName>Beta-fructofuranosidase</fullName>
    </alternativeName>
    <alternativeName>
        <fullName>Invertase</fullName>
    </alternativeName>
    <alternativeName>
        <fullName>Protein B46</fullName>
    </alternativeName>
    <alternativeName>
        <fullName>Saccharase</fullName>
    </alternativeName>
</protein>
<name>INVB_ZYMMO</name>
<sequence>MFNFNASRWTRAQAMKVNKFDLTTSMPEIGTDFPIMRDDLWLWDTWPLRDINGNPVSFKGWNVIFSLVADRNIPWNDRHSHARIGYFYSKDGKSWVYGGHLLQESANTRTAEWSGGTIMAPGSRNQVETFFTSTLFDKNGVREAVAAVTKGRIYADSEGVWFKGFDQSTDLFQADGLFYQNYAENNLWNFRDPHVFINPEDGETYALFEANVATVRGEDDIGEDEIGPVPANTVVPKDANLCSASIGIARCLSPDRTEWELLPPLLTAFGVNDQMERPHVIFQNGLTYLFTISHDSTYADGLTGSDGLYGFVSENGIFGPYEPLNGSGLVLGGPASQPTEAYAHYIMNNGLVESFINEIIDPKSGKVIAGGSLAPTVRVELQGHETFATEVFDYGYIPASYAWPVWPFPDRRK</sequence>
<keyword id="KW-0326">Glycosidase</keyword>
<keyword id="KW-0378">Hydrolase</keyword>
<keyword id="KW-1185">Reference proteome</keyword>
<keyword id="KW-0964">Secreted</keyword>
<reference key="1">
    <citation type="journal article" date="1995" name="Biosci. Biotechnol. Biochem.">
        <title>Cloning and characterization of Zymomonas mobilis genes encoding extracellular levansucrase and invertase.</title>
        <authorList>
            <person name="Kyono K."/>
            <person name="Yanase H."/>
            <person name="Tonomura K."/>
            <person name="Kawasaki H."/>
            <person name="Sakai T."/>
        </authorList>
    </citation>
    <scope>NUCLEOTIDE SEQUENCE [GENOMIC DNA]</scope>
    <source>
        <strain>ATCC 29191 / DSM 3580 / JCM 10190 / CECT 560 / NBRC 13756 / NCIMB 11199 / NRRL B-4490 / ZM6</strain>
    </source>
</reference>
<reference key="2">
    <citation type="submission" date="2000-10" db="EMBL/GenBank/DDBJ databases">
        <title>Sequence analysis of 44B6 fosmid clone of Zymomonas mobilis ZM4.</title>
        <authorList>
            <person name="Ahn J.Y."/>
            <person name="Kang H.S."/>
        </authorList>
    </citation>
    <scope>NUCLEOTIDE SEQUENCE [GENOMIC DNA]</scope>
    <source>
        <strain>ATCC 31821 / ZM4 / CP4</strain>
    </source>
</reference>
<reference key="3">
    <citation type="journal article" date="2005" name="Nat. Biotechnol.">
        <title>The genome sequence of the ethanologenic bacterium Zymomonas mobilis ZM4.</title>
        <authorList>
            <person name="Seo J.-S."/>
            <person name="Chong H."/>
            <person name="Park H.S."/>
            <person name="Yoon K.-O."/>
            <person name="Jung C."/>
            <person name="Kim J.J."/>
            <person name="Hong J.H."/>
            <person name="Kim H."/>
            <person name="Kim J.-H."/>
            <person name="Kil J.-I."/>
            <person name="Park C.J."/>
            <person name="Oh H.-M."/>
            <person name="Lee J.-S."/>
            <person name="Jin S.-J."/>
            <person name="Um H.-W."/>
            <person name="Lee H.-J."/>
            <person name="Oh S.-J."/>
            <person name="Kim J.Y."/>
            <person name="Kang H.L."/>
            <person name="Lee S.Y."/>
            <person name="Lee K.J."/>
            <person name="Kang H.S."/>
        </authorList>
    </citation>
    <scope>NUCLEOTIDE SEQUENCE [LARGE SCALE GENOMIC DNA]</scope>
    <source>
        <strain>ATCC 31821 / ZM4 / CP4</strain>
    </source>
</reference>
<proteinExistence type="inferred from homology"/>
<organism>
    <name type="scientific">Zymomonas mobilis subsp. mobilis (strain ATCC 31821 / ZM4 / CP4)</name>
    <dbReference type="NCBI Taxonomy" id="264203"/>
    <lineage>
        <taxon>Bacteria</taxon>
        <taxon>Pseudomonadati</taxon>
        <taxon>Pseudomonadota</taxon>
        <taxon>Alphaproteobacteria</taxon>
        <taxon>Sphingomonadales</taxon>
        <taxon>Zymomonadaceae</taxon>
        <taxon>Zymomonas</taxon>
    </lineage>
</organism>
<dbReference type="EC" id="3.2.1.26"/>
<dbReference type="EMBL" id="D17524">
    <property type="protein sequence ID" value="BAA04476.1"/>
    <property type="molecule type" value="Genomic_DNA"/>
</dbReference>
<dbReference type="EMBL" id="AF313764">
    <property type="protein sequence ID" value="AAG29871.1"/>
    <property type="molecule type" value="Genomic_DNA"/>
</dbReference>
<dbReference type="EMBL" id="AE008692">
    <property type="protein sequence ID" value="AAV88999.2"/>
    <property type="status" value="ALT_INIT"/>
    <property type="molecule type" value="Genomic_DNA"/>
</dbReference>
<dbReference type="PIR" id="JC2520">
    <property type="entry name" value="JC2520"/>
</dbReference>
<dbReference type="RefSeq" id="WP_012817354.1">
    <property type="nucleotide sequence ID" value="NZ_CP035711.1"/>
</dbReference>
<dbReference type="SMR" id="P0DJA4"/>
<dbReference type="STRING" id="264203.ZMO0375"/>
<dbReference type="CAZy" id="GH68">
    <property type="family name" value="Glycoside Hydrolase Family 68"/>
</dbReference>
<dbReference type="KEGG" id="zmo:ZMO0375"/>
<dbReference type="eggNOG" id="COG1621">
    <property type="taxonomic scope" value="Bacteria"/>
</dbReference>
<dbReference type="HOGENOM" id="CLU_031862_1_0_5"/>
<dbReference type="Proteomes" id="UP000001173">
    <property type="component" value="Chromosome"/>
</dbReference>
<dbReference type="GO" id="GO:0005576">
    <property type="term" value="C:extracellular region"/>
    <property type="evidence" value="ECO:0007669"/>
    <property type="project" value="UniProtKB-SubCell"/>
</dbReference>
<dbReference type="GO" id="GO:0004564">
    <property type="term" value="F:beta-fructofuranosidase activity"/>
    <property type="evidence" value="ECO:0007669"/>
    <property type="project" value="UniProtKB-EC"/>
</dbReference>
<dbReference type="GO" id="GO:0050053">
    <property type="term" value="F:levansucrase activity"/>
    <property type="evidence" value="ECO:0007669"/>
    <property type="project" value="InterPro"/>
</dbReference>
<dbReference type="GO" id="GO:0009758">
    <property type="term" value="P:carbohydrate utilization"/>
    <property type="evidence" value="ECO:0007669"/>
    <property type="project" value="InterPro"/>
</dbReference>
<dbReference type="CDD" id="cd08997">
    <property type="entry name" value="GH68"/>
    <property type="match status" value="1"/>
</dbReference>
<dbReference type="Gene3D" id="2.115.10.20">
    <property type="entry name" value="Glycosyl hydrolase domain, family 43"/>
    <property type="match status" value="1"/>
</dbReference>
<dbReference type="InterPro" id="IPR003469">
    <property type="entry name" value="Glyco_hydro_68"/>
</dbReference>
<dbReference type="InterPro" id="IPR023296">
    <property type="entry name" value="Glyco_hydro_beta-prop_sf"/>
</dbReference>
<dbReference type="Pfam" id="PF02435">
    <property type="entry name" value="Glyco_hydro_68"/>
    <property type="match status" value="1"/>
</dbReference>
<dbReference type="SUPFAM" id="SSF75005">
    <property type="entry name" value="Arabinanase/levansucrase/invertase"/>
    <property type="match status" value="1"/>
</dbReference>
<evidence type="ECO:0000250" key="1"/>
<evidence type="ECO:0000250" key="2">
    <source>
        <dbReference type="UniProtKB" id="Q74K42"/>
    </source>
</evidence>
<evidence type="ECO:0000305" key="3"/>
<accession>P0DJA4</accession>
<accession>Q5NQK5</accession>
<accession>Q60115</accession>
<accession>Q60117</accession>
<accession>Q60125</accession>
<comment type="catalytic activity">
    <reaction>
        <text>Hydrolysis of terminal non-reducing beta-D-fructofuranoside residues in beta-D-fructofuranosides.</text>
        <dbReference type="EC" id="3.2.1.26"/>
    </reaction>
</comment>
<comment type="subcellular location">
    <subcellularLocation>
        <location evidence="1">Secreted</location>
    </subcellularLocation>
</comment>
<comment type="similarity">
    <text evidence="3">Belongs to the glycosyl hydrolase 68 family.</text>
</comment>
<comment type="sequence caution" evidence="3">
    <conflict type="erroneous initiation">
        <sequence resource="EMBL-CDS" id="AAV88999"/>
    </conflict>
    <text>Truncated N-terminus.</text>
</comment>
<gene>
    <name type="primary">sacC</name>
    <name type="synonym">invB</name>
    <name type="synonym">sucE3</name>
    <name type="ordered locus">ZMO0375</name>
</gene>